<organismHost>
    <name type="scientific">Homo sapiens</name>
    <name type="common">Human</name>
    <dbReference type="NCBI Taxonomy" id="9606"/>
</organismHost>
<sequence>MLAHLNQVTRIPPCPPFSGREARLKFHFFSWSTFMLSWPNNATLREIRTRAATNLTHHPHLVDTLYHASPQTPFLTRSGALYRFVTCCNCTLPNISIQQCKAGDRPGDLEIILQSNGGGRPASFQFPSSPTGSLLRCIVAASLLPEVSVGHQELSPLRSRSQGGQTDVRSGPDPARRLVALLRREDGAPKDPPLGPFGHPRGPGPAKSEDEESERRDAPPPPLDSSFQASRLVPVGPGFRLLVFNTNRVINTKLVCSEPLVKMRVCNVPRLINNFVARKYVVKETAFTVSLFFTDGVGANLAINVNISGTYLSFLLAMTSLRCFLPVEAIYPAAVSNWNSTLDLHGLENQSLVRENRSGVFWTTNFPSVVSCRDGLNVSWFKAATATISRVHGQTLEQHLIREITPIVTHREAKISRIKNRLFTLLELRNRSQIQVLHKRFLEGLLDCASLLRLDPSCINRIASEGLFDFSKRSIAHSKNRHECALLGHRHSANVTKLVVNERKTRLDILGRNANFLTRCKHQVNLRQSPIFLTLLRHIRRRLGLGRASVKREITLLLAHLRKKTAPIHCRDAQV</sequence>
<proteinExistence type="inferred from homology"/>
<accession>P25215</accession>
<accession>Q8AZJ6</accession>
<protein>
    <recommendedName>
        <fullName evidence="6">Late gene expression regulator BcRF1</fullName>
    </recommendedName>
    <alternativeName>
        <fullName>TBP-like protein BcRF1</fullName>
    </alternativeName>
</protein>
<gene>
    <name type="ORF">BcRF1</name>
</gene>
<feature type="chain" id="PRO_0000116229" description="Late gene expression regulator BcRF1">
    <location>
        <begin position="1"/>
        <end position="575"/>
    </location>
</feature>
<feature type="region of interest" description="Disordered" evidence="1">
    <location>
        <begin position="153"/>
        <end position="174"/>
    </location>
</feature>
<feature type="region of interest" description="Disordered" evidence="1">
    <location>
        <begin position="186"/>
        <end position="228"/>
    </location>
</feature>
<feature type="compositionally biased region" description="Polar residues" evidence="1">
    <location>
        <begin position="158"/>
        <end position="168"/>
    </location>
</feature>
<comment type="function">
    <text evidence="2 3 4 5">DNA-binding protein that is required for viral late gene expression (PubMed:22457524). Selectively recognizes late promoters by binding to a non-canonical TATA box element (TATT) (PubMed:17400302, PubMed:22457524). Part of the viral pre-initiation complex (vPIC) that is responsible for the expression of vPIC-dependent late genes (PubMed:25165108, PubMed:31461506). vPIC is composed of at least BcRF1 that binds the viral TATT box, BDLF3.5, BDLF4, BFRF2, BGLF3, BGLF4 and BVLF1 (PubMed:25165108).</text>
</comment>
<comment type="similarity">
    <text evidence="7">Belongs to the herpesviridae UL87 family.</text>
</comment>
<comment type="caution">
    <text evidence="7">Be careful of the possible confusion between BCRF1 with BcRF1.</text>
</comment>
<comment type="sequence caution" evidence="7">
    <conflict type="erroneous initiation">
        <sequence resource="EMBL-CDS" id="CAA24795"/>
    </conflict>
</comment>
<comment type="sequence caution" evidence="7">
    <conflict type="erroneous initiation">
        <sequence resource="EMBL-CDS" id="CAD53448"/>
    </conflict>
</comment>
<name>UL87_EBVB9</name>
<dbReference type="EMBL" id="V01555">
    <property type="protein sequence ID" value="CAA24795.1"/>
    <property type="status" value="ALT_INIT"/>
    <property type="molecule type" value="Genomic_DNA"/>
</dbReference>
<dbReference type="EMBL" id="AJ507799">
    <property type="protein sequence ID" value="CAD53448.1"/>
    <property type="status" value="ALT_INIT"/>
    <property type="molecule type" value="Genomic_DNA"/>
</dbReference>
<dbReference type="RefSeq" id="YP_401698.1">
    <property type="nucleotide sequence ID" value="NC_007605.1"/>
</dbReference>
<dbReference type="DNASU" id="3783690"/>
<dbReference type="GeneID" id="3783690"/>
<dbReference type="KEGG" id="vg:3783690"/>
<dbReference type="Proteomes" id="UP000153037">
    <property type="component" value="Segment"/>
</dbReference>
<dbReference type="GO" id="GO:0003677">
    <property type="term" value="F:DNA binding"/>
    <property type="evidence" value="ECO:0007669"/>
    <property type="project" value="UniProtKB-KW"/>
</dbReference>
<dbReference type="GO" id="GO:0019083">
    <property type="term" value="P:viral transcription"/>
    <property type="evidence" value="ECO:0007669"/>
    <property type="project" value="UniProtKB-KW"/>
</dbReference>
<dbReference type="InterPro" id="IPR004285">
    <property type="entry name" value="Herpes_UL87_C"/>
</dbReference>
<dbReference type="Pfam" id="PF03043">
    <property type="entry name" value="Herpes_UL87"/>
    <property type="match status" value="1"/>
</dbReference>
<keyword id="KW-0238">DNA-binding</keyword>
<keyword id="KW-1185">Reference proteome</keyword>
<keyword id="KW-1195">Viral transcription</keyword>
<evidence type="ECO:0000256" key="1">
    <source>
        <dbReference type="SAM" id="MobiDB-lite"/>
    </source>
</evidence>
<evidence type="ECO:0000269" key="2">
    <source>
    </source>
</evidence>
<evidence type="ECO:0000269" key="3">
    <source>
    </source>
</evidence>
<evidence type="ECO:0000269" key="4">
    <source>
    </source>
</evidence>
<evidence type="ECO:0000269" key="5">
    <source>
    </source>
</evidence>
<evidence type="ECO:0000303" key="6">
    <source>
    </source>
</evidence>
<evidence type="ECO:0000305" key="7"/>
<organism>
    <name type="scientific">Epstein-Barr virus (strain B95-8)</name>
    <name type="common">HHV-4</name>
    <name type="synonym">Human herpesvirus 4</name>
    <dbReference type="NCBI Taxonomy" id="10377"/>
    <lineage>
        <taxon>Viruses</taxon>
        <taxon>Duplodnaviria</taxon>
        <taxon>Heunggongvirae</taxon>
        <taxon>Peploviricota</taxon>
        <taxon>Herviviricetes</taxon>
        <taxon>Herpesvirales</taxon>
        <taxon>Orthoherpesviridae</taxon>
        <taxon>Gammaherpesvirinae</taxon>
        <taxon>Lymphocryptovirus</taxon>
        <taxon>Lymphocryptovirus humangamma4</taxon>
        <taxon>Epstein-Barr virus (strain GD1)</taxon>
    </lineage>
</organism>
<reference key="1">
    <citation type="journal article" date="1984" name="Nature">
        <title>DNA sequence and expression of the B95-8 Epstein-Barr virus genome.</title>
        <authorList>
            <person name="Baer R."/>
            <person name="Bankier A.T."/>
            <person name="Biggin M.D."/>
            <person name="Deininger P.L."/>
            <person name="Farrell P.J."/>
            <person name="Gibson T.J."/>
            <person name="Hatfull G."/>
            <person name="Hudson G.S."/>
            <person name="Satchwell S.C."/>
            <person name="Seguin C."/>
            <person name="Tuffnell P.S."/>
            <person name="Barrell B.G."/>
        </authorList>
    </citation>
    <scope>NUCLEOTIDE SEQUENCE [LARGE SCALE GENOMIC DNA]</scope>
</reference>
<reference key="2">
    <citation type="journal article" date="2003" name="Virology">
        <title>Updated Epstein-Barr virus (EBV) DNA sequence and analysis of a promoter for the BART (CST, BARF0) RNAs of EBV.</title>
        <authorList>
            <person name="de Jesus O."/>
            <person name="Smith P.R."/>
            <person name="Spender L.C."/>
            <person name="Elgueta Karstegl C."/>
            <person name="Niller H.H."/>
            <person name="Huang D."/>
            <person name="Farrell P.J."/>
        </authorList>
    </citation>
    <scope>GENOME REANNOTATION</scope>
</reference>
<reference key="3">
    <citation type="journal article" date="2007" name="Antiviral Res.">
        <title>Identification of Herpes TATT-binding protein.</title>
        <authorList>
            <person name="Wyrwicz L.S."/>
            <person name="Rychlewski L."/>
        </authorList>
    </citation>
    <scope>IDENTIFICATION</scope>
    <scope>FUNCTION</scope>
</reference>
<reference key="4">
    <citation type="journal article" date="2012" name="J. Virol.">
        <title>The Epstein-Barr virus BcRF1 gene product is a TBP-like protein with an essential role in late gene expression.</title>
        <authorList>
            <person name="Gruffat H."/>
            <person name="Kadjouf F."/>
            <person name="Mariame B."/>
            <person name="Manet E."/>
        </authorList>
    </citation>
    <scope>FUNCTION</scope>
</reference>
<reference key="5">
    <citation type="journal article" date="2014" name="J. Virol.">
        <title>Epstein-Barr virus late gene transcription depends on the assembly of a virus-specific preinitiation complex.</title>
        <authorList>
            <person name="Aubry V."/>
            <person name="Mure F."/>
            <person name="Mariame B."/>
            <person name="Deschamps T."/>
            <person name="Wyrwicz L.S."/>
            <person name="Manet E."/>
            <person name="Gruffat H."/>
        </authorList>
    </citation>
    <scope>FUNCTION</scope>
</reference>
<reference key="6">
    <citation type="journal article" date="2019" name="PLoS Pathog.">
        <title>A single phosphoacceptor residue in BGLF3 is essential for transcription of Epstein-Barr virus late genes.</title>
        <authorList>
            <person name="Li J."/>
            <person name="Walsh A."/>
            <person name="Lam T.T."/>
            <person name="Delecluse H.J."/>
            <person name="El-Guindy A."/>
        </authorList>
    </citation>
    <scope>FUNCTION</scope>
</reference>